<evidence type="ECO:0000255" key="1">
    <source>
        <dbReference type="HAMAP-Rule" id="MF_00048"/>
    </source>
</evidence>
<keyword id="KW-1185">Reference proteome</keyword>
<comment type="similarity">
    <text evidence="1">Belongs to the UPF0102 family.</text>
</comment>
<feature type="chain" id="PRO_1000009205" description="UPF0102 protein NT01CX_2205">
    <location>
        <begin position="1"/>
        <end position="120"/>
    </location>
</feature>
<name>Y2205_CLONN</name>
<reference key="1">
    <citation type="journal article" date="2006" name="Nat. Biotechnol.">
        <title>The genome and transcriptomes of the anti-tumor agent Clostridium novyi-NT.</title>
        <authorList>
            <person name="Bettegowda C."/>
            <person name="Huang X."/>
            <person name="Lin J."/>
            <person name="Cheong I."/>
            <person name="Kohli M."/>
            <person name="Szabo S.A."/>
            <person name="Zhang X."/>
            <person name="Diaz L.A. Jr."/>
            <person name="Velculescu V.E."/>
            <person name="Parmigiani G."/>
            <person name="Kinzler K.W."/>
            <person name="Vogelstein B."/>
            <person name="Zhou S."/>
        </authorList>
    </citation>
    <scope>NUCLEOTIDE SEQUENCE [LARGE SCALE GENOMIC DNA]</scope>
    <source>
        <strain>NT</strain>
    </source>
</reference>
<organism>
    <name type="scientific">Clostridium novyi (strain NT)</name>
    <dbReference type="NCBI Taxonomy" id="386415"/>
    <lineage>
        <taxon>Bacteria</taxon>
        <taxon>Bacillati</taxon>
        <taxon>Bacillota</taxon>
        <taxon>Clostridia</taxon>
        <taxon>Eubacteriales</taxon>
        <taxon>Clostridiaceae</taxon>
        <taxon>Clostridium</taxon>
    </lineage>
</organism>
<accession>A0Q0X6</accession>
<gene>
    <name type="ordered locus">NT01CX_2205</name>
</gene>
<dbReference type="EMBL" id="CP000382">
    <property type="protein sequence ID" value="ABK61593.1"/>
    <property type="molecule type" value="Genomic_DNA"/>
</dbReference>
<dbReference type="RefSeq" id="WP_011722278.1">
    <property type="nucleotide sequence ID" value="NC_008593.1"/>
</dbReference>
<dbReference type="SMR" id="A0Q0X6"/>
<dbReference type="STRING" id="386415.NT01CX_2205"/>
<dbReference type="KEGG" id="cno:NT01CX_2205"/>
<dbReference type="eggNOG" id="COG0792">
    <property type="taxonomic scope" value="Bacteria"/>
</dbReference>
<dbReference type="HOGENOM" id="CLU_115353_2_1_9"/>
<dbReference type="Proteomes" id="UP000008220">
    <property type="component" value="Chromosome"/>
</dbReference>
<dbReference type="GO" id="GO:0003676">
    <property type="term" value="F:nucleic acid binding"/>
    <property type="evidence" value="ECO:0007669"/>
    <property type="project" value="InterPro"/>
</dbReference>
<dbReference type="CDD" id="cd20736">
    <property type="entry name" value="PoNe_Nuclease"/>
    <property type="match status" value="1"/>
</dbReference>
<dbReference type="Gene3D" id="3.40.1350.10">
    <property type="match status" value="1"/>
</dbReference>
<dbReference type="HAMAP" id="MF_00048">
    <property type="entry name" value="UPF0102"/>
    <property type="match status" value="1"/>
</dbReference>
<dbReference type="InterPro" id="IPR011335">
    <property type="entry name" value="Restrct_endonuc-II-like"/>
</dbReference>
<dbReference type="InterPro" id="IPR011856">
    <property type="entry name" value="tRNA_endonuc-like_dom_sf"/>
</dbReference>
<dbReference type="InterPro" id="IPR003509">
    <property type="entry name" value="UPF0102_YraN-like"/>
</dbReference>
<dbReference type="NCBIfam" id="NF009150">
    <property type="entry name" value="PRK12497.1-3"/>
    <property type="match status" value="1"/>
</dbReference>
<dbReference type="PANTHER" id="PTHR34039">
    <property type="entry name" value="UPF0102 PROTEIN YRAN"/>
    <property type="match status" value="1"/>
</dbReference>
<dbReference type="PANTHER" id="PTHR34039:SF1">
    <property type="entry name" value="UPF0102 PROTEIN YRAN"/>
    <property type="match status" value="1"/>
</dbReference>
<dbReference type="Pfam" id="PF02021">
    <property type="entry name" value="UPF0102"/>
    <property type="match status" value="1"/>
</dbReference>
<dbReference type="SUPFAM" id="SSF52980">
    <property type="entry name" value="Restriction endonuclease-like"/>
    <property type="match status" value="1"/>
</dbReference>
<proteinExistence type="inferred from homology"/>
<protein>
    <recommendedName>
        <fullName evidence="1">UPF0102 protein NT01CX_2205</fullName>
    </recommendedName>
</protein>
<sequence length="120" mass="14193">MYNFNKPIGSYGEHISENFLVSKGHKILTKNFRCRSGEIDIISSHNNYICFTEVKTRYNYSFGIPCESVTITKIKKIRNTAKFYIYINKLFKNNFKFNVIEIILNKYSNDYSINFIENAF</sequence>